<organism>
    <name type="scientific">Synechococcus sp. (strain RCC307)</name>
    <dbReference type="NCBI Taxonomy" id="316278"/>
    <lineage>
        <taxon>Bacteria</taxon>
        <taxon>Bacillati</taxon>
        <taxon>Cyanobacteriota</taxon>
        <taxon>Cyanophyceae</taxon>
        <taxon>Synechococcales</taxon>
        <taxon>Synechococcaceae</taxon>
        <taxon>Synechococcus</taxon>
    </lineage>
</organism>
<feature type="chain" id="PRO_1000047721" description="Aminomethyltransferase">
    <location>
        <begin position="1"/>
        <end position="359"/>
    </location>
</feature>
<dbReference type="EC" id="2.1.2.10" evidence="1"/>
<dbReference type="EMBL" id="CT978603">
    <property type="protein sequence ID" value="CAK29340.1"/>
    <property type="molecule type" value="Genomic_DNA"/>
</dbReference>
<dbReference type="SMR" id="A5GWT1"/>
<dbReference type="STRING" id="316278.SynRCC307_2437"/>
<dbReference type="KEGG" id="syr:SynRCC307_2437"/>
<dbReference type="eggNOG" id="COG0404">
    <property type="taxonomic scope" value="Bacteria"/>
</dbReference>
<dbReference type="HOGENOM" id="CLU_007884_10_2_3"/>
<dbReference type="OrthoDB" id="9774591at2"/>
<dbReference type="Proteomes" id="UP000001115">
    <property type="component" value="Chromosome"/>
</dbReference>
<dbReference type="GO" id="GO:0005829">
    <property type="term" value="C:cytosol"/>
    <property type="evidence" value="ECO:0007669"/>
    <property type="project" value="TreeGrafter"/>
</dbReference>
<dbReference type="GO" id="GO:0005960">
    <property type="term" value="C:glycine cleavage complex"/>
    <property type="evidence" value="ECO:0007669"/>
    <property type="project" value="InterPro"/>
</dbReference>
<dbReference type="GO" id="GO:0004047">
    <property type="term" value="F:aminomethyltransferase activity"/>
    <property type="evidence" value="ECO:0007669"/>
    <property type="project" value="UniProtKB-UniRule"/>
</dbReference>
<dbReference type="GO" id="GO:0008483">
    <property type="term" value="F:transaminase activity"/>
    <property type="evidence" value="ECO:0007669"/>
    <property type="project" value="UniProtKB-KW"/>
</dbReference>
<dbReference type="GO" id="GO:0019464">
    <property type="term" value="P:glycine decarboxylation via glycine cleavage system"/>
    <property type="evidence" value="ECO:0007669"/>
    <property type="project" value="UniProtKB-UniRule"/>
</dbReference>
<dbReference type="FunFam" id="2.40.30.110:FF:000003">
    <property type="entry name" value="Aminomethyltransferase"/>
    <property type="match status" value="1"/>
</dbReference>
<dbReference type="FunFam" id="3.30.70.1400:FF:000001">
    <property type="entry name" value="Aminomethyltransferase"/>
    <property type="match status" value="1"/>
</dbReference>
<dbReference type="FunFam" id="4.10.1250.10:FF:000001">
    <property type="entry name" value="Aminomethyltransferase"/>
    <property type="match status" value="1"/>
</dbReference>
<dbReference type="Gene3D" id="2.40.30.110">
    <property type="entry name" value="Aminomethyltransferase beta-barrel domains"/>
    <property type="match status" value="1"/>
</dbReference>
<dbReference type="Gene3D" id="3.30.70.1400">
    <property type="entry name" value="Aminomethyltransferase beta-barrel domains"/>
    <property type="match status" value="1"/>
</dbReference>
<dbReference type="Gene3D" id="4.10.1250.10">
    <property type="entry name" value="Aminomethyltransferase fragment"/>
    <property type="match status" value="1"/>
</dbReference>
<dbReference type="Gene3D" id="3.30.1360.120">
    <property type="entry name" value="Probable tRNA modification gtpase trme, domain 1"/>
    <property type="match status" value="1"/>
</dbReference>
<dbReference type="HAMAP" id="MF_00259">
    <property type="entry name" value="GcvT"/>
    <property type="match status" value="1"/>
</dbReference>
<dbReference type="InterPro" id="IPR006223">
    <property type="entry name" value="GCS_T"/>
</dbReference>
<dbReference type="InterPro" id="IPR022903">
    <property type="entry name" value="GCS_T_bac"/>
</dbReference>
<dbReference type="InterPro" id="IPR013977">
    <property type="entry name" value="GCST_C"/>
</dbReference>
<dbReference type="InterPro" id="IPR006222">
    <property type="entry name" value="GCV_T_N"/>
</dbReference>
<dbReference type="InterPro" id="IPR028896">
    <property type="entry name" value="GcvT/YgfZ/DmdA"/>
</dbReference>
<dbReference type="InterPro" id="IPR029043">
    <property type="entry name" value="GcvT/YgfZ_C"/>
</dbReference>
<dbReference type="InterPro" id="IPR027266">
    <property type="entry name" value="TrmE/GcvT_dom1"/>
</dbReference>
<dbReference type="NCBIfam" id="TIGR00528">
    <property type="entry name" value="gcvT"/>
    <property type="match status" value="1"/>
</dbReference>
<dbReference type="NCBIfam" id="NF001567">
    <property type="entry name" value="PRK00389.1"/>
    <property type="match status" value="1"/>
</dbReference>
<dbReference type="PANTHER" id="PTHR43757">
    <property type="entry name" value="AMINOMETHYLTRANSFERASE"/>
    <property type="match status" value="1"/>
</dbReference>
<dbReference type="PANTHER" id="PTHR43757:SF2">
    <property type="entry name" value="AMINOMETHYLTRANSFERASE, MITOCHONDRIAL"/>
    <property type="match status" value="1"/>
</dbReference>
<dbReference type="Pfam" id="PF01571">
    <property type="entry name" value="GCV_T"/>
    <property type="match status" value="1"/>
</dbReference>
<dbReference type="Pfam" id="PF08669">
    <property type="entry name" value="GCV_T_C"/>
    <property type="match status" value="1"/>
</dbReference>
<dbReference type="PIRSF" id="PIRSF006487">
    <property type="entry name" value="GcvT"/>
    <property type="match status" value="1"/>
</dbReference>
<dbReference type="SUPFAM" id="SSF101790">
    <property type="entry name" value="Aminomethyltransferase beta-barrel domain"/>
    <property type="match status" value="1"/>
</dbReference>
<dbReference type="SUPFAM" id="SSF103025">
    <property type="entry name" value="Folate-binding domain"/>
    <property type="match status" value="1"/>
</dbReference>
<keyword id="KW-0032">Aminotransferase</keyword>
<keyword id="KW-1185">Reference proteome</keyword>
<keyword id="KW-0808">Transferase</keyword>
<sequence length="359" mass="38851">MLHTPLFELCREAGGRMVPFAGWEMAVQFEGLMAEHRAVRQRCGVFDISHMGVLTLTGSGVKDKLQGLVPSDLQRIGPGEAQYTVLLNEAGGIRDDLIVYDRSDTEVVVVINAACADSDTAWIKQQLEPQGVSVSDRKAGGVLLALQGPEAVGRLERLCGESLAGVPRFGHRDLTIKGEPVFAARTGYTGEDGFELLLTASAGQSLWRQLLEDGVAPCGLGARDSLRLEAAMHLYGNDMDANTSPLECGLGWLVHLEMPIEFVGREALERQTAEGVSRKLVGLQLQGRAIARHDYPVLHNGEPVGVVTSGTFSPTLEHPVALASVRADLAKLGNELMVEIRGRQEPAVVVKRPFYRRQG</sequence>
<name>GCST_SYNR3</name>
<evidence type="ECO:0000255" key="1">
    <source>
        <dbReference type="HAMAP-Rule" id="MF_00259"/>
    </source>
</evidence>
<accession>A5GWT1</accession>
<gene>
    <name evidence="1" type="primary">gcvT</name>
    <name type="ordered locus">SynRCC307_2437</name>
</gene>
<protein>
    <recommendedName>
        <fullName evidence="1">Aminomethyltransferase</fullName>
        <ecNumber evidence="1">2.1.2.10</ecNumber>
    </recommendedName>
    <alternativeName>
        <fullName evidence="1">Glycine cleavage system T protein</fullName>
    </alternativeName>
</protein>
<reference key="1">
    <citation type="submission" date="2006-05" db="EMBL/GenBank/DDBJ databases">
        <authorList>
            <consortium name="Genoscope"/>
        </authorList>
    </citation>
    <scope>NUCLEOTIDE SEQUENCE [LARGE SCALE GENOMIC DNA]</scope>
    <source>
        <strain>RCC307</strain>
    </source>
</reference>
<proteinExistence type="inferred from homology"/>
<comment type="function">
    <text evidence="1">The glycine cleavage system catalyzes the degradation of glycine.</text>
</comment>
<comment type="catalytic activity">
    <reaction evidence="1">
        <text>N(6)-[(R)-S(8)-aminomethyldihydrolipoyl]-L-lysyl-[protein] + (6S)-5,6,7,8-tetrahydrofolate = N(6)-[(R)-dihydrolipoyl]-L-lysyl-[protein] + (6R)-5,10-methylene-5,6,7,8-tetrahydrofolate + NH4(+)</text>
        <dbReference type="Rhea" id="RHEA:16945"/>
        <dbReference type="Rhea" id="RHEA-COMP:10475"/>
        <dbReference type="Rhea" id="RHEA-COMP:10492"/>
        <dbReference type="ChEBI" id="CHEBI:15636"/>
        <dbReference type="ChEBI" id="CHEBI:28938"/>
        <dbReference type="ChEBI" id="CHEBI:57453"/>
        <dbReference type="ChEBI" id="CHEBI:83100"/>
        <dbReference type="ChEBI" id="CHEBI:83143"/>
        <dbReference type="EC" id="2.1.2.10"/>
    </reaction>
</comment>
<comment type="subunit">
    <text evidence="1">The glycine cleavage system is composed of four proteins: P, T, L and H.</text>
</comment>
<comment type="similarity">
    <text evidence="1">Belongs to the GcvT family.</text>
</comment>